<comment type="function">
    <text evidence="2">GTP hydrolase that promotes the GTP-dependent binding of aminoacyl-tRNA to the A-site of ribosomes during protein biosynthesis.</text>
</comment>
<comment type="catalytic activity">
    <reaction evidence="2">
        <text>GTP + H2O = GDP + phosphate + H(+)</text>
        <dbReference type="Rhea" id="RHEA:19669"/>
        <dbReference type="ChEBI" id="CHEBI:15377"/>
        <dbReference type="ChEBI" id="CHEBI:15378"/>
        <dbReference type="ChEBI" id="CHEBI:37565"/>
        <dbReference type="ChEBI" id="CHEBI:43474"/>
        <dbReference type="ChEBI" id="CHEBI:58189"/>
        <dbReference type="EC" id="3.6.5.3"/>
    </reaction>
    <physiologicalReaction direction="left-to-right" evidence="2">
        <dbReference type="Rhea" id="RHEA:19670"/>
    </physiologicalReaction>
</comment>
<comment type="subunit">
    <text evidence="2">Monomer.</text>
</comment>
<comment type="subcellular location">
    <subcellularLocation>
        <location evidence="2">Cytoplasm</location>
    </subcellularLocation>
</comment>
<comment type="similarity">
    <text evidence="2">Belongs to the TRAFAC class translation factor GTPase superfamily. Classic translation factor GTPase family. EF-Tu/EF-1A subfamily.</text>
</comment>
<organism>
    <name type="scientific">Yersinia enterocolitica serotype O:8 / biotype 1B (strain NCTC 13174 / 8081)</name>
    <dbReference type="NCBI Taxonomy" id="393305"/>
    <lineage>
        <taxon>Bacteria</taxon>
        <taxon>Pseudomonadati</taxon>
        <taxon>Pseudomonadota</taxon>
        <taxon>Gammaproteobacteria</taxon>
        <taxon>Enterobacterales</taxon>
        <taxon>Yersiniaceae</taxon>
        <taxon>Yersinia</taxon>
    </lineage>
</organism>
<dbReference type="EC" id="3.6.5.3" evidence="2"/>
<dbReference type="EMBL" id="AM286415">
    <property type="protein sequence ID" value="CAL10411.1"/>
    <property type="molecule type" value="Genomic_DNA"/>
</dbReference>
<dbReference type="RefSeq" id="YP_001004661.1">
    <property type="nucleotide sequence ID" value="NC_008800.1"/>
</dbReference>
<dbReference type="SMR" id="A1JIH3"/>
<dbReference type="KEGG" id="yen:YE0278"/>
<dbReference type="PATRIC" id="fig|393305.7.peg.371"/>
<dbReference type="eggNOG" id="COG0050">
    <property type="taxonomic scope" value="Bacteria"/>
</dbReference>
<dbReference type="HOGENOM" id="CLU_007265_0_1_6"/>
<dbReference type="OrthoDB" id="9803139at2"/>
<dbReference type="Proteomes" id="UP000000642">
    <property type="component" value="Chromosome"/>
</dbReference>
<dbReference type="GO" id="GO:0005829">
    <property type="term" value="C:cytosol"/>
    <property type="evidence" value="ECO:0007669"/>
    <property type="project" value="TreeGrafter"/>
</dbReference>
<dbReference type="GO" id="GO:0005525">
    <property type="term" value="F:GTP binding"/>
    <property type="evidence" value="ECO:0007669"/>
    <property type="project" value="UniProtKB-UniRule"/>
</dbReference>
<dbReference type="GO" id="GO:0003924">
    <property type="term" value="F:GTPase activity"/>
    <property type="evidence" value="ECO:0007669"/>
    <property type="project" value="InterPro"/>
</dbReference>
<dbReference type="GO" id="GO:0097216">
    <property type="term" value="F:guanosine tetraphosphate binding"/>
    <property type="evidence" value="ECO:0007669"/>
    <property type="project" value="UniProtKB-ARBA"/>
</dbReference>
<dbReference type="GO" id="GO:0003746">
    <property type="term" value="F:translation elongation factor activity"/>
    <property type="evidence" value="ECO:0007669"/>
    <property type="project" value="UniProtKB-UniRule"/>
</dbReference>
<dbReference type="CDD" id="cd01884">
    <property type="entry name" value="EF_Tu"/>
    <property type="match status" value="1"/>
</dbReference>
<dbReference type="CDD" id="cd03697">
    <property type="entry name" value="EFTU_II"/>
    <property type="match status" value="1"/>
</dbReference>
<dbReference type="CDD" id="cd03707">
    <property type="entry name" value="EFTU_III"/>
    <property type="match status" value="1"/>
</dbReference>
<dbReference type="FunFam" id="2.40.30.10:FF:000001">
    <property type="entry name" value="Elongation factor Tu"/>
    <property type="match status" value="1"/>
</dbReference>
<dbReference type="FunFam" id="3.40.50.300:FF:000003">
    <property type="entry name" value="Elongation factor Tu"/>
    <property type="match status" value="1"/>
</dbReference>
<dbReference type="Gene3D" id="3.40.50.300">
    <property type="entry name" value="P-loop containing nucleotide triphosphate hydrolases"/>
    <property type="match status" value="1"/>
</dbReference>
<dbReference type="Gene3D" id="2.40.30.10">
    <property type="entry name" value="Translation factors"/>
    <property type="match status" value="2"/>
</dbReference>
<dbReference type="HAMAP" id="MF_00118_B">
    <property type="entry name" value="EF_Tu_B"/>
    <property type="match status" value="1"/>
</dbReference>
<dbReference type="InterPro" id="IPR041709">
    <property type="entry name" value="EF-Tu_GTP-bd"/>
</dbReference>
<dbReference type="InterPro" id="IPR050055">
    <property type="entry name" value="EF-Tu_GTPase"/>
</dbReference>
<dbReference type="InterPro" id="IPR004161">
    <property type="entry name" value="EFTu-like_2"/>
</dbReference>
<dbReference type="InterPro" id="IPR033720">
    <property type="entry name" value="EFTU_2"/>
</dbReference>
<dbReference type="InterPro" id="IPR031157">
    <property type="entry name" value="G_TR_CS"/>
</dbReference>
<dbReference type="InterPro" id="IPR027417">
    <property type="entry name" value="P-loop_NTPase"/>
</dbReference>
<dbReference type="InterPro" id="IPR005225">
    <property type="entry name" value="Small_GTP-bd"/>
</dbReference>
<dbReference type="InterPro" id="IPR000795">
    <property type="entry name" value="T_Tr_GTP-bd_dom"/>
</dbReference>
<dbReference type="InterPro" id="IPR009000">
    <property type="entry name" value="Transl_B-barrel_sf"/>
</dbReference>
<dbReference type="InterPro" id="IPR009001">
    <property type="entry name" value="Transl_elong_EF1A/Init_IF2_C"/>
</dbReference>
<dbReference type="InterPro" id="IPR004541">
    <property type="entry name" value="Transl_elong_EFTu/EF1A_bac/org"/>
</dbReference>
<dbReference type="InterPro" id="IPR004160">
    <property type="entry name" value="Transl_elong_EFTu/EF1A_C"/>
</dbReference>
<dbReference type="NCBIfam" id="TIGR00485">
    <property type="entry name" value="EF-Tu"/>
    <property type="match status" value="1"/>
</dbReference>
<dbReference type="NCBIfam" id="NF000766">
    <property type="entry name" value="PRK00049.1"/>
    <property type="match status" value="1"/>
</dbReference>
<dbReference type="NCBIfam" id="NF009372">
    <property type="entry name" value="PRK12735.1"/>
    <property type="match status" value="1"/>
</dbReference>
<dbReference type="NCBIfam" id="NF009373">
    <property type="entry name" value="PRK12736.1"/>
    <property type="match status" value="1"/>
</dbReference>
<dbReference type="NCBIfam" id="TIGR00231">
    <property type="entry name" value="small_GTP"/>
    <property type="match status" value="1"/>
</dbReference>
<dbReference type="PANTHER" id="PTHR43721:SF22">
    <property type="entry name" value="ELONGATION FACTOR TU, MITOCHONDRIAL"/>
    <property type="match status" value="1"/>
</dbReference>
<dbReference type="PANTHER" id="PTHR43721">
    <property type="entry name" value="ELONGATION FACTOR TU-RELATED"/>
    <property type="match status" value="1"/>
</dbReference>
<dbReference type="Pfam" id="PF00009">
    <property type="entry name" value="GTP_EFTU"/>
    <property type="match status" value="1"/>
</dbReference>
<dbReference type="Pfam" id="PF03144">
    <property type="entry name" value="GTP_EFTU_D2"/>
    <property type="match status" value="1"/>
</dbReference>
<dbReference type="Pfam" id="PF03143">
    <property type="entry name" value="GTP_EFTU_D3"/>
    <property type="match status" value="1"/>
</dbReference>
<dbReference type="PRINTS" id="PR00315">
    <property type="entry name" value="ELONGATNFCT"/>
</dbReference>
<dbReference type="SUPFAM" id="SSF50465">
    <property type="entry name" value="EF-Tu/eEF-1alpha/eIF2-gamma C-terminal domain"/>
    <property type="match status" value="1"/>
</dbReference>
<dbReference type="SUPFAM" id="SSF52540">
    <property type="entry name" value="P-loop containing nucleoside triphosphate hydrolases"/>
    <property type="match status" value="1"/>
</dbReference>
<dbReference type="SUPFAM" id="SSF50447">
    <property type="entry name" value="Translation proteins"/>
    <property type="match status" value="1"/>
</dbReference>
<dbReference type="PROSITE" id="PS00301">
    <property type="entry name" value="G_TR_1"/>
    <property type="match status" value="1"/>
</dbReference>
<dbReference type="PROSITE" id="PS51722">
    <property type="entry name" value="G_TR_2"/>
    <property type="match status" value="1"/>
</dbReference>
<keyword id="KW-0963">Cytoplasm</keyword>
<keyword id="KW-0251">Elongation factor</keyword>
<keyword id="KW-0342">GTP-binding</keyword>
<keyword id="KW-0378">Hydrolase</keyword>
<keyword id="KW-0460">Magnesium</keyword>
<keyword id="KW-0479">Metal-binding</keyword>
<keyword id="KW-0547">Nucleotide-binding</keyword>
<keyword id="KW-0648">Protein biosynthesis</keyword>
<evidence type="ECO:0000250" key="1"/>
<evidence type="ECO:0000255" key="2">
    <source>
        <dbReference type="HAMAP-Rule" id="MF_00118"/>
    </source>
</evidence>
<protein>
    <recommendedName>
        <fullName evidence="2">Elongation factor Tu 1</fullName>
        <shortName evidence="2">EF-Tu 1</shortName>
        <ecNumber evidence="2">3.6.5.3</ecNumber>
    </recommendedName>
</protein>
<gene>
    <name evidence="2" type="primary">tuf1</name>
    <name type="synonym">tufA</name>
    <name type="ordered locus">YE0278</name>
</gene>
<accession>A1JIH3</accession>
<reference key="1">
    <citation type="journal article" date="2006" name="PLoS Genet.">
        <title>The complete genome sequence and comparative genome analysis of the high pathogenicity Yersinia enterocolitica strain 8081.</title>
        <authorList>
            <person name="Thomson N.R."/>
            <person name="Howard S."/>
            <person name="Wren B.W."/>
            <person name="Holden M.T.G."/>
            <person name="Crossman L."/>
            <person name="Challis G.L."/>
            <person name="Churcher C."/>
            <person name="Mungall K."/>
            <person name="Brooks K."/>
            <person name="Chillingworth T."/>
            <person name="Feltwell T."/>
            <person name="Abdellah Z."/>
            <person name="Hauser H."/>
            <person name="Jagels K."/>
            <person name="Maddison M."/>
            <person name="Moule S."/>
            <person name="Sanders M."/>
            <person name="Whitehead S."/>
            <person name="Quail M.A."/>
            <person name="Dougan G."/>
            <person name="Parkhill J."/>
            <person name="Prentice M.B."/>
        </authorList>
    </citation>
    <scope>NUCLEOTIDE SEQUENCE [LARGE SCALE GENOMIC DNA]</scope>
    <source>
        <strain>NCTC 13174 / 8081</strain>
    </source>
</reference>
<proteinExistence type="inferred from homology"/>
<feature type="chain" id="PRO_0000337582" description="Elongation factor Tu 1">
    <location>
        <begin position="1"/>
        <end position="394"/>
    </location>
</feature>
<feature type="domain" description="tr-type G">
    <location>
        <begin position="10"/>
        <end position="204"/>
    </location>
</feature>
<feature type="region of interest" description="G1" evidence="1">
    <location>
        <begin position="19"/>
        <end position="26"/>
    </location>
</feature>
<feature type="region of interest" description="G2" evidence="1">
    <location>
        <begin position="60"/>
        <end position="64"/>
    </location>
</feature>
<feature type="region of interest" description="G3" evidence="1">
    <location>
        <begin position="81"/>
        <end position="84"/>
    </location>
</feature>
<feature type="region of interest" description="G4" evidence="1">
    <location>
        <begin position="136"/>
        <end position="139"/>
    </location>
</feature>
<feature type="region of interest" description="G5" evidence="1">
    <location>
        <begin position="174"/>
        <end position="176"/>
    </location>
</feature>
<feature type="binding site" evidence="2">
    <location>
        <begin position="19"/>
        <end position="26"/>
    </location>
    <ligand>
        <name>GTP</name>
        <dbReference type="ChEBI" id="CHEBI:37565"/>
    </ligand>
</feature>
<feature type="binding site" evidence="2">
    <location>
        <position position="26"/>
    </location>
    <ligand>
        <name>Mg(2+)</name>
        <dbReference type="ChEBI" id="CHEBI:18420"/>
    </ligand>
</feature>
<feature type="binding site" evidence="2">
    <location>
        <begin position="81"/>
        <end position="85"/>
    </location>
    <ligand>
        <name>GTP</name>
        <dbReference type="ChEBI" id="CHEBI:37565"/>
    </ligand>
</feature>
<feature type="binding site" evidence="2">
    <location>
        <begin position="136"/>
        <end position="139"/>
    </location>
    <ligand>
        <name>GTP</name>
        <dbReference type="ChEBI" id="CHEBI:37565"/>
    </ligand>
</feature>
<name>EFTU1_YERE8</name>
<sequence>MSKEKFERTKPHVNVGTIGHVDHGKTTLTAAITTVLAKTYGGNARAFDQIDNAPEEKARGITINTSHVEYDTPSRHYAHVDCPGHADYVKNMITGAAQMDGAILVVAATDGPMPQTREHILLGRQVGVPYIIVFMNKCDMVDDEELLELVEMEVRDLLSTYDFPGDDTPVVRGSALKALEGEPEWEAKIIELAGYLDSYIPEPERAIDKPFLLPIEDVFSISGRGTVVTGRVERGIVKVGEEVEIVGLKDTVKSTCTGVEMFRKLLDEGRAGENVGVLLRGIKREDIERGQVLAKPGSIKPHTKFESEVYILSKDEGGRHTPFFKGYRPQFYFRTTDVTGTIELPEGVEMVMPGDNIQMIVNLIAPIAMDDGLRFAIREGGRTVGAGVVAKVIE</sequence>